<dbReference type="EMBL" id="AM167904">
    <property type="protein sequence ID" value="CAJ50015.1"/>
    <property type="molecule type" value="Genomic_DNA"/>
</dbReference>
<dbReference type="RefSeq" id="WP_012418066.1">
    <property type="nucleotide sequence ID" value="NC_010645.1"/>
</dbReference>
<dbReference type="SMR" id="Q2KXW4"/>
<dbReference type="STRING" id="360910.BAV2405"/>
<dbReference type="GeneID" id="92934419"/>
<dbReference type="KEGG" id="bav:BAV2405"/>
<dbReference type="eggNOG" id="COG2003">
    <property type="taxonomic scope" value="Bacteria"/>
</dbReference>
<dbReference type="HOGENOM" id="CLU_073529_0_1_4"/>
<dbReference type="OrthoDB" id="9804482at2"/>
<dbReference type="Proteomes" id="UP000001977">
    <property type="component" value="Chromosome"/>
</dbReference>
<dbReference type="GO" id="GO:0046872">
    <property type="term" value="F:metal ion binding"/>
    <property type="evidence" value="ECO:0007669"/>
    <property type="project" value="UniProtKB-KW"/>
</dbReference>
<dbReference type="GO" id="GO:0008237">
    <property type="term" value="F:metallopeptidase activity"/>
    <property type="evidence" value="ECO:0007669"/>
    <property type="project" value="UniProtKB-KW"/>
</dbReference>
<dbReference type="GO" id="GO:0006508">
    <property type="term" value="P:proteolysis"/>
    <property type="evidence" value="ECO:0007669"/>
    <property type="project" value="UniProtKB-KW"/>
</dbReference>
<dbReference type="CDD" id="cd08071">
    <property type="entry name" value="MPN_DUF2466"/>
    <property type="match status" value="1"/>
</dbReference>
<dbReference type="Gene3D" id="3.40.140.10">
    <property type="entry name" value="Cytidine Deaminase, domain 2"/>
    <property type="match status" value="1"/>
</dbReference>
<dbReference type="InterPro" id="IPR037518">
    <property type="entry name" value="MPN"/>
</dbReference>
<dbReference type="InterPro" id="IPR025657">
    <property type="entry name" value="RadC_JAB"/>
</dbReference>
<dbReference type="InterPro" id="IPR010994">
    <property type="entry name" value="RuvA_2-like"/>
</dbReference>
<dbReference type="InterPro" id="IPR001405">
    <property type="entry name" value="UPF0758"/>
</dbReference>
<dbReference type="InterPro" id="IPR020891">
    <property type="entry name" value="UPF0758_CS"/>
</dbReference>
<dbReference type="InterPro" id="IPR046778">
    <property type="entry name" value="UPF0758_N"/>
</dbReference>
<dbReference type="NCBIfam" id="NF000642">
    <property type="entry name" value="PRK00024.1"/>
    <property type="match status" value="1"/>
</dbReference>
<dbReference type="NCBIfam" id="TIGR00608">
    <property type="entry name" value="radc"/>
    <property type="match status" value="1"/>
</dbReference>
<dbReference type="PANTHER" id="PTHR30471">
    <property type="entry name" value="DNA REPAIR PROTEIN RADC"/>
    <property type="match status" value="1"/>
</dbReference>
<dbReference type="PANTHER" id="PTHR30471:SF3">
    <property type="entry name" value="UPF0758 PROTEIN YEES-RELATED"/>
    <property type="match status" value="1"/>
</dbReference>
<dbReference type="Pfam" id="PF04002">
    <property type="entry name" value="RadC"/>
    <property type="match status" value="1"/>
</dbReference>
<dbReference type="Pfam" id="PF20582">
    <property type="entry name" value="UPF0758_N"/>
    <property type="match status" value="1"/>
</dbReference>
<dbReference type="SUPFAM" id="SSF102712">
    <property type="entry name" value="JAB1/MPN domain"/>
    <property type="match status" value="1"/>
</dbReference>
<dbReference type="SUPFAM" id="SSF47781">
    <property type="entry name" value="RuvA domain 2-like"/>
    <property type="match status" value="1"/>
</dbReference>
<dbReference type="PROSITE" id="PS50249">
    <property type="entry name" value="MPN"/>
    <property type="match status" value="1"/>
</dbReference>
<dbReference type="PROSITE" id="PS01302">
    <property type="entry name" value="UPF0758"/>
    <property type="match status" value="1"/>
</dbReference>
<feature type="chain" id="PRO_1000089791" description="UPF0758 protein BAV2405">
    <location>
        <begin position="1"/>
        <end position="225"/>
    </location>
</feature>
<feature type="domain" description="MPN" evidence="1">
    <location>
        <begin position="103"/>
        <end position="225"/>
    </location>
</feature>
<feature type="short sequence motif" description="JAMM motif" evidence="1">
    <location>
        <begin position="174"/>
        <end position="187"/>
    </location>
</feature>
<feature type="binding site" evidence="1">
    <location>
        <position position="174"/>
    </location>
    <ligand>
        <name>Zn(2+)</name>
        <dbReference type="ChEBI" id="CHEBI:29105"/>
        <note>catalytic</note>
    </ligand>
</feature>
<feature type="binding site" evidence="1">
    <location>
        <position position="176"/>
    </location>
    <ligand>
        <name>Zn(2+)</name>
        <dbReference type="ChEBI" id="CHEBI:29105"/>
        <note>catalytic</note>
    </ligand>
</feature>
<feature type="binding site" evidence="1">
    <location>
        <position position="187"/>
    </location>
    <ligand>
        <name>Zn(2+)</name>
        <dbReference type="ChEBI" id="CHEBI:29105"/>
        <note>catalytic</note>
    </ligand>
</feature>
<sequence>MNLPDTLLPCQRPRERLLRLGAPLLNDAELLALCLRTGRHGCNALELAQRLLTRHGGLRGIFALSAQELCTEPGLGVAKACSLLVAPELSRRSIEETLLGRQAMKHPEEVRRYCLTALAHQPVEHCIALYLDQQLQLLACGELERGTLGRASVFPREVVREALRLHAGAIILAHNHPSGNPQPSAADCAFTQQLSQALALVDIRLVDHIIVARDQALSMAERGLI</sequence>
<comment type="similarity">
    <text evidence="2">Belongs to the UPF0758 family.</text>
</comment>
<evidence type="ECO:0000255" key="1">
    <source>
        <dbReference type="PROSITE-ProRule" id="PRU01182"/>
    </source>
</evidence>
<evidence type="ECO:0000305" key="2"/>
<keyword id="KW-0378">Hydrolase</keyword>
<keyword id="KW-0479">Metal-binding</keyword>
<keyword id="KW-0482">Metalloprotease</keyword>
<keyword id="KW-0645">Protease</keyword>
<keyword id="KW-1185">Reference proteome</keyword>
<keyword id="KW-0862">Zinc</keyword>
<protein>
    <recommendedName>
        <fullName>UPF0758 protein BAV2405</fullName>
    </recommendedName>
</protein>
<proteinExistence type="inferred from homology"/>
<reference key="1">
    <citation type="journal article" date="2006" name="J. Bacteriol.">
        <title>Comparison of the genome sequence of the poultry pathogen Bordetella avium with those of B. bronchiseptica, B. pertussis, and B. parapertussis reveals extensive diversity in surface structures associated with host interaction.</title>
        <authorList>
            <person name="Sebaihia M."/>
            <person name="Preston A."/>
            <person name="Maskell D.J."/>
            <person name="Kuzmiak H."/>
            <person name="Connell T.D."/>
            <person name="King N.D."/>
            <person name="Orndorff P.E."/>
            <person name="Miyamoto D.M."/>
            <person name="Thomson N.R."/>
            <person name="Harris D."/>
            <person name="Goble A."/>
            <person name="Lord A."/>
            <person name="Murphy L."/>
            <person name="Quail M.A."/>
            <person name="Rutter S."/>
            <person name="Squares R."/>
            <person name="Squares S."/>
            <person name="Woodward J."/>
            <person name="Parkhill J."/>
            <person name="Temple L.M."/>
        </authorList>
    </citation>
    <scope>NUCLEOTIDE SEQUENCE [LARGE SCALE GENOMIC DNA]</scope>
    <source>
        <strain>197N</strain>
    </source>
</reference>
<organism>
    <name type="scientific">Bordetella avium (strain 197N)</name>
    <dbReference type="NCBI Taxonomy" id="360910"/>
    <lineage>
        <taxon>Bacteria</taxon>
        <taxon>Pseudomonadati</taxon>
        <taxon>Pseudomonadota</taxon>
        <taxon>Betaproteobacteria</taxon>
        <taxon>Burkholderiales</taxon>
        <taxon>Alcaligenaceae</taxon>
        <taxon>Bordetella</taxon>
    </lineage>
</organism>
<gene>
    <name type="ordered locus">BAV2405</name>
</gene>
<name>Y2405_BORA1</name>
<accession>Q2KXW4</accession>